<evidence type="ECO:0000250" key="1">
    <source>
        <dbReference type="UniProtKB" id="P33317"/>
    </source>
</evidence>
<evidence type="ECO:0000305" key="2"/>
<sequence>MTDQPAKKVHSAPTLKVQLRSENAIAPTKGSAAAAGYDIYASQDCVIPGRGQGLVATDVSFTVPVGTYGRIAPRSGLAVKHGIQTGAGVVDRDYTGEVKIVLFNHSDRDYAVKRGDRVAQLVLERIVDDAEVVVVESLDESSRGEGGFGSTGN</sequence>
<feature type="chain" id="PRO_0000182929" description="Deoxyuridine 5'-triphosphate nucleotidohydrolase">
    <location>
        <begin position="1"/>
        <end position="153"/>
    </location>
</feature>
<feature type="binding site" evidence="1">
    <location>
        <position position="75"/>
    </location>
    <ligand>
        <name>dUMP</name>
        <dbReference type="ChEBI" id="CHEBI:246422"/>
    </ligand>
</feature>
<feature type="binding site" evidence="1">
    <location>
        <position position="88"/>
    </location>
    <ligand>
        <name>dUMP</name>
        <dbReference type="ChEBI" id="CHEBI:246422"/>
    </ligand>
</feature>
<feature type="binding site" evidence="1">
    <location>
        <position position="91"/>
    </location>
    <ligand>
        <name>dUMP</name>
        <dbReference type="ChEBI" id="CHEBI:246422"/>
    </ligand>
</feature>
<feature type="binding site" evidence="1">
    <location>
        <position position="94"/>
    </location>
    <ligand>
        <name>dUMP</name>
        <dbReference type="ChEBI" id="CHEBI:246422"/>
    </ligand>
</feature>
<feature type="binding site" evidence="1">
    <location>
        <position position="99"/>
    </location>
    <ligand>
        <name>dUMP</name>
        <dbReference type="ChEBI" id="CHEBI:246422"/>
    </ligand>
</feature>
<feature type="binding site" evidence="1">
    <location>
        <position position="143"/>
    </location>
    <ligand>
        <name>dUMP</name>
        <dbReference type="ChEBI" id="CHEBI:246422"/>
    </ligand>
</feature>
<feature type="binding site" evidence="1">
    <location>
        <position position="148"/>
    </location>
    <ligand>
        <name>dUMP</name>
        <dbReference type="ChEBI" id="CHEBI:246422"/>
    </ligand>
</feature>
<feature type="binding site" evidence="1">
    <location>
        <position position="149"/>
    </location>
    <ligand>
        <name>dUMP</name>
        <dbReference type="ChEBI" id="CHEBI:246422"/>
    </ligand>
</feature>
<reference key="1">
    <citation type="journal article" date="2004" name="Science">
        <title>The Ashbya gossypii genome as a tool for mapping the ancient Saccharomyces cerevisiae genome.</title>
        <authorList>
            <person name="Dietrich F.S."/>
            <person name="Voegeli S."/>
            <person name="Brachat S."/>
            <person name="Lerch A."/>
            <person name="Gates K."/>
            <person name="Steiner S."/>
            <person name="Mohr C."/>
            <person name="Poehlmann R."/>
            <person name="Luedi P."/>
            <person name="Choi S."/>
            <person name="Wing R.A."/>
            <person name="Flavier A."/>
            <person name="Gaffney T.D."/>
            <person name="Philippsen P."/>
        </authorList>
    </citation>
    <scope>NUCLEOTIDE SEQUENCE [LARGE SCALE GENOMIC DNA]</scope>
    <source>
        <strain>ATCC 10895 / CBS 109.51 / FGSC 9923 / NRRL Y-1056</strain>
    </source>
</reference>
<reference key="2">
    <citation type="journal article" date="2013" name="G3 (Bethesda)">
        <title>Genomes of Ashbya fungi isolated from insects reveal four mating-type loci, numerous translocations, lack of transposons, and distinct gene duplications.</title>
        <authorList>
            <person name="Dietrich F.S."/>
            <person name="Voegeli S."/>
            <person name="Kuo S."/>
            <person name="Philippsen P."/>
        </authorList>
    </citation>
    <scope>GENOME REANNOTATION</scope>
    <source>
        <strain>ATCC 10895 / CBS 109.51 / FGSC 9923 / NRRL Y-1056</strain>
    </source>
</reference>
<comment type="function">
    <text evidence="1">Involved in nucleotide metabolism via production of dUMP, the immediate precursor of thymidine nucleotides, and decreases the intracellular concentration of dUTP so that uracil cannot be incorporated into DNA.</text>
</comment>
<comment type="catalytic activity">
    <reaction evidence="1">
        <text>dUTP + H2O = dUMP + diphosphate + H(+)</text>
        <dbReference type="Rhea" id="RHEA:10248"/>
        <dbReference type="ChEBI" id="CHEBI:15377"/>
        <dbReference type="ChEBI" id="CHEBI:15378"/>
        <dbReference type="ChEBI" id="CHEBI:33019"/>
        <dbReference type="ChEBI" id="CHEBI:61555"/>
        <dbReference type="ChEBI" id="CHEBI:246422"/>
        <dbReference type="EC" id="3.6.1.23"/>
    </reaction>
    <physiologicalReaction direction="left-to-right" evidence="1">
        <dbReference type="Rhea" id="RHEA:10249"/>
    </physiologicalReaction>
</comment>
<comment type="cofactor">
    <cofactor evidence="1">
        <name>Mg(2+)</name>
        <dbReference type="ChEBI" id="CHEBI:18420"/>
    </cofactor>
</comment>
<comment type="pathway">
    <text>Pyrimidine metabolism; dUMP biosynthesis; dUMP from dCTP (dUTP route): step 2/2.</text>
</comment>
<comment type="subunit">
    <text evidence="1">Homotrimer.</text>
</comment>
<comment type="similarity">
    <text evidence="2">Belongs to the dUTPase family.</text>
</comment>
<proteinExistence type="inferred from homology"/>
<name>DUT_EREGS</name>
<accession>Q74ZF0</accession>
<gene>
    <name type="primary">DUT1</name>
    <name type="ordered locus">AGR249C</name>
</gene>
<protein>
    <recommendedName>
        <fullName evidence="1">Deoxyuridine 5'-triphosphate nucleotidohydrolase</fullName>
        <shortName evidence="1">dUTPase</shortName>
        <ecNumber evidence="1">3.6.1.23</ecNumber>
    </recommendedName>
    <alternativeName>
        <fullName evidence="1">dUTP pyrophosphatase</fullName>
    </alternativeName>
</protein>
<organism>
    <name type="scientific">Eremothecium gossypii (strain ATCC 10895 / CBS 109.51 / FGSC 9923 / NRRL Y-1056)</name>
    <name type="common">Yeast</name>
    <name type="synonym">Ashbya gossypii</name>
    <dbReference type="NCBI Taxonomy" id="284811"/>
    <lineage>
        <taxon>Eukaryota</taxon>
        <taxon>Fungi</taxon>
        <taxon>Dikarya</taxon>
        <taxon>Ascomycota</taxon>
        <taxon>Saccharomycotina</taxon>
        <taxon>Saccharomycetes</taxon>
        <taxon>Saccharomycetales</taxon>
        <taxon>Saccharomycetaceae</taxon>
        <taxon>Eremothecium</taxon>
    </lineage>
</organism>
<keyword id="KW-0378">Hydrolase</keyword>
<keyword id="KW-0460">Magnesium</keyword>
<keyword id="KW-0479">Metal-binding</keyword>
<keyword id="KW-0546">Nucleotide metabolism</keyword>
<keyword id="KW-1185">Reference proteome</keyword>
<dbReference type="EC" id="3.6.1.23" evidence="1"/>
<dbReference type="EMBL" id="AE016820">
    <property type="protein sequence ID" value="AAS54739.1"/>
    <property type="molecule type" value="Genomic_DNA"/>
</dbReference>
<dbReference type="RefSeq" id="NP_986915.1">
    <property type="nucleotide sequence ID" value="NM_211977.1"/>
</dbReference>
<dbReference type="SMR" id="Q74ZF0"/>
<dbReference type="FunCoup" id="Q74ZF0">
    <property type="interactions" value="1197"/>
</dbReference>
<dbReference type="STRING" id="284811.Q74ZF0"/>
<dbReference type="EnsemblFungi" id="AAS54739">
    <property type="protein sequence ID" value="AAS54739"/>
    <property type="gene ID" value="AGOS_AGR249C"/>
</dbReference>
<dbReference type="GeneID" id="4623217"/>
<dbReference type="KEGG" id="ago:AGOS_AGR249C"/>
<dbReference type="eggNOG" id="KOG3370">
    <property type="taxonomic scope" value="Eukaryota"/>
</dbReference>
<dbReference type="HOGENOM" id="CLU_068508_2_1_1"/>
<dbReference type="InParanoid" id="Q74ZF0"/>
<dbReference type="OMA" id="GREFHTQ"/>
<dbReference type="OrthoDB" id="419889at2759"/>
<dbReference type="UniPathway" id="UPA00610">
    <property type="reaction ID" value="UER00666"/>
</dbReference>
<dbReference type="Proteomes" id="UP000000591">
    <property type="component" value="Chromosome VII"/>
</dbReference>
<dbReference type="GO" id="GO:0004170">
    <property type="term" value="F:dUTP diphosphatase activity"/>
    <property type="evidence" value="ECO:0000318"/>
    <property type="project" value="GO_Central"/>
</dbReference>
<dbReference type="GO" id="GO:0000287">
    <property type="term" value="F:magnesium ion binding"/>
    <property type="evidence" value="ECO:0000318"/>
    <property type="project" value="GO_Central"/>
</dbReference>
<dbReference type="GO" id="GO:0006226">
    <property type="term" value="P:dUMP biosynthetic process"/>
    <property type="evidence" value="ECO:0000318"/>
    <property type="project" value="GO_Central"/>
</dbReference>
<dbReference type="GO" id="GO:0046081">
    <property type="term" value="P:dUTP catabolic process"/>
    <property type="evidence" value="ECO:0000318"/>
    <property type="project" value="GO_Central"/>
</dbReference>
<dbReference type="CDD" id="cd07557">
    <property type="entry name" value="trimeric_dUTPase"/>
    <property type="match status" value="1"/>
</dbReference>
<dbReference type="FunFam" id="2.70.40.10:FF:000007">
    <property type="entry name" value="dUTP pyrophosphatase"/>
    <property type="match status" value="1"/>
</dbReference>
<dbReference type="Gene3D" id="2.70.40.10">
    <property type="match status" value="1"/>
</dbReference>
<dbReference type="InterPro" id="IPR008181">
    <property type="entry name" value="dUTPase"/>
</dbReference>
<dbReference type="InterPro" id="IPR029054">
    <property type="entry name" value="dUTPase-like"/>
</dbReference>
<dbReference type="InterPro" id="IPR036157">
    <property type="entry name" value="dUTPase-like_sf"/>
</dbReference>
<dbReference type="InterPro" id="IPR033704">
    <property type="entry name" value="dUTPase_trimeric"/>
</dbReference>
<dbReference type="NCBIfam" id="TIGR00576">
    <property type="entry name" value="dut"/>
    <property type="match status" value="1"/>
</dbReference>
<dbReference type="NCBIfam" id="NF001862">
    <property type="entry name" value="PRK00601.1"/>
    <property type="match status" value="1"/>
</dbReference>
<dbReference type="PANTHER" id="PTHR11241">
    <property type="entry name" value="DEOXYURIDINE 5'-TRIPHOSPHATE NUCLEOTIDOHYDROLASE"/>
    <property type="match status" value="1"/>
</dbReference>
<dbReference type="PANTHER" id="PTHR11241:SF0">
    <property type="entry name" value="DEOXYURIDINE 5'-TRIPHOSPHATE NUCLEOTIDOHYDROLASE"/>
    <property type="match status" value="1"/>
</dbReference>
<dbReference type="Pfam" id="PF00692">
    <property type="entry name" value="dUTPase"/>
    <property type="match status" value="1"/>
</dbReference>
<dbReference type="SUPFAM" id="SSF51283">
    <property type="entry name" value="dUTPase-like"/>
    <property type="match status" value="1"/>
</dbReference>